<dbReference type="EC" id="2.7.7.6" evidence="1"/>
<dbReference type="EMBL" id="CP000910">
    <property type="protein sequence ID" value="ABY23849.1"/>
    <property type="molecule type" value="Genomic_DNA"/>
</dbReference>
<dbReference type="RefSeq" id="WP_012245518.1">
    <property type="nucleotide sequence ID" value="NC_010168.1"/>
</dbReference>
<dbReference type="SMR" id="A9WSR1"/>
<dbReference type="STRING" id="288705.RSal33209_2117"/>
<dbReference type="KEGG" id="rsa:RSal33209_2117"/>
<dbReference type="eggNOG" id="COG0202">
    <property type="taxonomic scope" value="Bacteria"/>
</dbReference>
<dbReference type="HOGENOM" id="CLU_053084_0_1_11"/>
<dbReference type="Proteomes" id="UP000002007">
    <property type="component" value="Chromosome"/>
</dbReference>
<dbReference type="GO" id="GO:0005737">
    <property type="term" value="C:cytoplasm"/>
    <property type="evidence" value="ECO:0007669"/>
    <property type="project" value="UniProtKB-ARBA"/>
</dbReference>
<dbReference type="GO" id="GO:0000428">
    <property type="term" value="C:DNA-directed RNA polymerase complex"/>
    <property type="evidence" value="ECO:0007669"/>
    <property type="project" value="UniProtKB-KW"/>
</dbReference>
<dbReference type="GO" id="GO:0003677">
    <property type="term" value="F:DNA binding"/>
    <property type="evidence" value="ECO:0007669"/>
    <property type="project" value="UniProtKB-UniRule"/>
</dbReference>
<dbReference type="GO" id="GO:0003899">
    <property type="term" value="F:DNA-directed RNA polymerase activity"/>
    <property type="evidence" value="ECO:0007669"/>
    <property type="project" value="UniProtKB-UniRule"/>
</dbReference>
<dbReference type="GO" id="GO:0046983">
    <property type="term" value="F:protein dimerization activity"/>
    <property type="evidence" value="ECO:0007669"/>
    <property type="project" value="InterPro"/>
</dbReference>
<dbReference type="GO" id="GO:0006351">
    <property type="term" value="P:DNA-templated transcription"/>
    <property type="evidence" value="ECO:0007669"/>
    <property type="project" value="UniProtKB-UniRule"/>
</dbReference>
<dbReference type="CDD" id="cd06928">
    <property type="entry name" value="RNAP_alpha_NTD"/>
    <property type="match status" value="1"/>
</dbReference>
<dbReference type="FunFam" id="1.10.150.20:FF:000001">
    <property type="entry name" value="DNA-directed RNA polymerase subunit alpha"/>
    <property type="match status" value="1"/>
</dbReference>
<dbReference type="FunFam" id="2.170.120.12:FF:000001">
    <property type="entry name" value="DNA-directed RNA polymerase subunit alpha"/>
    <property type="match status" value="1"/>
</dbReference>
<dbReference type="Gene3D" id="1.10.150.20">
    <property type="entry name" value="5' to 3' exonuclease, C-terminal subdomain"/>
    <property type="match status" value="1"/>
</dbReference>
<dbReference type="Gene3D" id="2.170.120.12">
    <property type="entry name" value="DNA-directed RNA polymerase, insert domain"/>
    <property type="match status" value="1"/>
</dbReference>
<dbReference type="Gene3D" id="3.30.1360.10">
    <property type="entry name" value="RNA polymerase, RBP11-like subunit"/>
    <property type="match status" value="1"/>
</dbReference>
<dbReference type="HAMAP" id="MF_00059">
    <property type="entry name" value="RNApol_bact_RpoA"/>
    <property type="match status" value="1"/>
</dbReference>
<dbReference type="InterPro" id="IPR011262">
    <property type="entry name" value="DNA-dir_RNA_pol_insert"/>
</dbReference>
<dbReference type="InterPro" id="IPR011263">
    <property type="entry name" value="DNA-dir_RNA_pol_RpoA/D/Rpb3"/>
</dbReference>
<dbReference type="InterPro" id="IPR011773">
    <property type="entry name" value="DNA-dir_RpoA"/>
</dbReference>
<dbReference type="InterPro" id="IPR036603">
    <property type="entry name" value="RBP11-like"/>
</dbReference>
<dbReference type="InterPro" id="IPR011260">
    <property type="entry name" value="RNAP_asu_C"/>
</dbReference>
<dbReference type="InterPro" id="IPR036643">
    <property type="entry name" value="RNApol_insert_sf"/>
</dbReference>
<dbReference type="NCBIfam" id="NF003513">
    <property type="entry name" value="PRK05182.1-2"/>
    <property type="match status" value="1"/>
</dbReference>
<dbReference type="NCBIfam" id="NF003514">
    <property type="entry name" value="PRK05182.1-4"/>
    <property type="match status" value="1"/>
</dbReference>
<dbReference type="NCBIfam" id="NF003519">
    <property type="entry name" value="PRK05182.2-5"/>
    <property type="match status" value="1"/>
</dbReference>
<dbReference type="NCBIfam" id="TIGR02027">
    <property type="entry name" value="rpoA"/>
    <property type="match status" value="1"/>
</dbReference>
<dbReference type="Pfam" id="PF01000">
    <property type="entry name" value="RNA_pol_A_bac"/>
    <property type="match status" value="1"/>
</dbReference>
<dbReference type="Pfam" id="PF03118">
    <property type="entry name" value="RNA_pol_A_CTD"/>
    <property type="match status" value="1"/>
</dbReference>
<dbReference type="Pfam" id="PF01193">
    <property type="entry name" value="RNA_pol_L"/>
    <property type="match status" value="1"/>
</dbReference>
<dbReference type="SMART" id="SM00662">
    <property type="entry name" value="RPOLD"/>
    <property type="match status" value="1"/>
</dbReference>
<dbReference type="SUPFAM" id="SSF47789">
    <property type="entry name" value="C-terminal domain of RNA polymerase alpha subunit"/>
    <property type="match status" value="1"/>
</dbReference>
<dbReference type="SUPFAM" id="SSF56553">
    <property type="entry name" value="Insert subdomain of RNA polymerase alpha subunit"/>
    <property type="match status" value="1"/>
</dbReference>
<dbReference type="SUPFAM" id="SSF55257">
    <property type="entry name" value="RBP11-like subunits of RNA polymerase"/>
    <property type="match status" value="1"/>
</dbReference>
<accession>A9WSR1</accession>
<name>RPOA_RENSM</name>
<proteinExistence type="inferred from homology"/>
<comment type="function">
    <text evidence="1">DNA-dependent RNA polymerase catalyzes the transcription of DNA into RNA using the four ribonucleoside triphosphates as substrates.</text>
</comment>
<comment type="catalytic activity">
    <reaction evidence="1">
        <text>RNA(n) + a ribonucleoside 5'-triphosphate = RNA(n+1) + diphosphate</text>
        <dbReference type="Rhea" id="RHEA:21248"/>
        <dbReference type="Rhea" id="RHEA-COMP:14527"/>
        <dbReference type="Rhea" id="RHEA-COMP:17342"/>
        <dbReference type="ChEBI" id="CHEBI:33019"/>
        <dbReference type="ChEBI" id="CHEBI:61557"/>
        <dbReference type="ChEBI" id="CHEBI:140395"/>
        <dbReference type="EC" id="2.7.7.6"/>
    </reaction>
</comment>
<comment type="subunit">
    <text evidence="1">Homodimer. The RNAP catalytic core consists of 2 alpha, 1 beta, 1 beta' and 1 omega subunit. When a sigma factor is associated with the core the holoenzyme is formed, which can initiate transcription.</text>
</comment>
<comment type="domain">
    <text evidence="1">The N-terminal domain is essential for RNAP assembly and basal transcription, whereas the C-terminal domain is involved in interaction with transcriptional regulators and with upstream promoter elements.</text>
</comment>
<comment type="similarity">
    <text evidence="1">Belongs to the RNA polymerase alpha chain family.</text>
</comment>
<feature type="chain" id="PRO_1000075013" description="DNA-directed RNA polymerase subunit alpha">
    <location>
        <begin position="1"/>
        <end position="336"/>
    </location>
</feature>
<feature type="region of interest" description="Alpha N-terminal domain (alpha-NTD)" evidence="1">
    <location>
        <begin position="1"/>
        <end position="226"/>
    </location>
</feature>
<feature type="region of interest" description="Alpha C-terminal domain (alpha-CTD)" evidence="1">
    <location>
        <begin position="243"/>
        <end position="336"/>
    </location>
</feature>
<organism>
    <name type="scientific">Renibacterium salmoninarum (strain ATCC 33209 / DSM 20767 / JCM 11484 / NBRC 15589 / NCIMB 2235)</name>
    <dbReference type="NCBI Taxonomy" id="288705"/>
    <lineage>
        <taxon>Bacteria</taxon>
        <taxon>Bacillati</taxon>
        <taxon>Actinomycetota</taxon>
        <taxon>Actinomycetes</taxon>
        <taxon>Micrococcales</taxon>
        <taxon>Micrococcaceae</taxon>
        <taxon>Renibacterium</taxon>
    </lineage>
</organism>
<reference key="1">
    <citation type="journal article" date="2008" name="J. Bacteriol.">
        <title>Genome sequence of the fish pathogen Renibacterium salmoninarum suggests reductive evolution away from an environmental Arthrobacter ancestor.</title>
        <authorList>
            <person name="Wiens G.D."/>
            <person name="Rockey D.D."/>
            <person name="Wu Z."/>
            <person name="Chang J."/>
            <person name="Levy R."/>
            <person name="Crane S."/>
            <person name="Chen D.S."/>
            <person name="Capri G.R."/>
            <person name="Burnett J.R."/>
            <person name="Sudheesh P.S."/>
            <person name="Schipma M.J."/>
            <person name="Burd H."/>
            <person name="Bhattacharyya A."/>
            <person name="Rhodes L.D."/>
            <person name="Kaul R."/>
            <person name="Strom M.S."/>
        </authorList>
    </citation>
    <scope>NUCLEOTIDE SEQUENCE [LARGE SCALE GENOMIC DNA]</scope>
    <source>
        <strain>ATCC 33209 / DSM 20767 / JCM 11484 / NBRC 15589 / NCIMB 2235</strain>
    </source>
</reference>
<gene>
    <name evidence="1" type="primary">rpoA</name>
    <name type="ordered locus">RSal33209_2117</name>
</gene>
<evidence type="ECO:0000255" key="1">
    <source>
        <dbReference type="HAMAP-Rule" id="MF_00059"/>
    </source>
</evidence>
<sequence length="336" mass="36140">MLIAQRPTLSEEVVSDNRSRFIIEPLEPGFGYTLGNSLRRTLLSSIPGAAVTSIRIDGVLHEFTTVPGVKEDVTEIILNIKNLSVSSEHDEPVVAYLRKQGPGVVTAADIAPPAGVEFHNPDLHIATLNSKGKFELELTIERGRGYVSAAQNKSGDAEIGRIPVDSIYSPVLKVTFRVEATRVEQRTDFDRLIVDVETKQAIAPRDAVASAGTTLVELFGLARELNTAAEGIEIGPSPTDAALAADMALPIEDLDLTVRSYNCLKREGIHTVGELVARSEADLMDIRNFGAKSIDEVKAKLVELGLSLKDSPPGFDLAARAAAIDESDDAFGDDEL</sequence>
<keyword id="KW-0240">DNA-directed RNA polymerase</keyword>
<keyword id="KW-0548">Nucleotidyltransferase</keyword>
<keyword id="KW-1185">Reference proteome</keyword>
<keyword id="KW-0804">Transcription</keyword>
<keyword id="KW-0808">Transferase</keyword>
<protein>
    <recommendedName>
        <fullName evidence="1">DNA-directed RNA polymerase subunit alpha</fullName>
        <shortName evidence="1">RNAP subunit alpha</shortName>
        <ecNumber evidence="1">2.7.7.6</ecNumber>
    </recommendedName>
    <alternativeName>
        <fullName evidence="1">RNA polymerase subunit alpha</fullName>
    </alternativeName>
    <alternativeName>
        <fullName evidence="1">Transcriptase subunit alpha</fullName>
    </alternativeName>
</protein>